<dbReference type="EMBL" id="CP000350">
    <property type="protein sequence ID" value="ABJ75809.1"/>
    <property type="molecule type" value="Genomic_DNA"/>
</dbReference>
<dbReference type="RefSeq" id="WP_011671711.1">
    <property type="nucleotide sequence ID" value="NC_008510.1"/>
</dbReference>
<dbReference type="SMR" id="Q04TG1"/>
<dbReference type="KEGG" id="lbj:LBJ_1205"/>
<dbReference type="HOGENOM" id="CLU_030805_9_3_12"/>
<dbReference type="Proteomes" id="UP000000656">
    <property type="component" value="Chromosome 1"/>
</dbReference>
<dbReference type="CDD" id="cd00885">
    <property type="entry name" value="cinA"/>
    <property type="match status" value="1"/>
</dbReference>
<dbReference type="Gene3D" id="3.90.950.20">
    <property type="entry name" value="CinA-like"/>
    <property type="match status" value="1"/>
</dbReference>
<dbReference type="Gene3D" id="3.40.980.10">
    <property type="entry name" value="MoaB/Mog-like domain"/>
    <property type="match status" value="1"/>
</dbReference>
<dbReference type="HAMAP" id="MF_00226_B">
    <property type="entry name" value="CinA_B"/>
    <property type="match status" value="1"/>
</dbReference>
<dbReference type="InterPro" id="IPR050101">
    <property type="entry name" value="CinA"/>
</dbReference>
<dbReference type="InterPro" id="IPR036653">
    <property type="entry name" value="CinA-like_C"/>
</dbReference>
<dbReference type="InterPro" id="IPR008136">
    <property type="entry name" value="CinA_C"/>
</dbReference>
<dbReference type="InterPro" id="IPR008135">
    <property type="entry name" value="Competence-induced_CinA"/>
</dbReference>
<dbReference type="InterPro" id="IPR036425">
    <property type="entry name" value="MoaB/Mog-like_dom_sf"/>
</dbReference>
<dbReference type="InterPro" id="IPR001453">
    <property type="entry name" value="MoaB/Mog_dom"/>
</dbReference>
<dbReference type="NCBIfam" id="TIGR00199">
    <property type="entry name" value="PncC_domain"/>
    <property type="match status" value="1"/>
</dbReference>
<dbReference type="PANTHER" id="PTHR13939">
    <property type="entry name" value="NICOTINAMIDE-NUCLEOTIDE AMIDOHYDROLASE PNCC"/>
    <property type="match status" value="1"/>
</dbReference>
<dbReference type="PANTHER" id="PTHR13939:SF0">
    <property type="entry name" value="NMN AMIDOHYDROLASE-LIKE PROTEIN YFAY"/>
    <property type="match status" value="1"/>
</dbReference>
<dbReference type="Pfam" id="PF02464">
    <property type="entry name" value="CinA"/>
    <property type="match status" value="1"/>
</dbReference>
<dbReference type="Pfam" id="PF00994">
    <property type="entry name" value="MoCF_biosynth"/>
    <property type="match status" value="1"/>
</dbReference>
<dbReference type="PIRSF" id="PIRSF006728">
    <property type="entry name" value="CinA"/>
    <property type="match status" value="1"/>
</dbReference>
<dbReference type="SMART" id="SM00852">
    <property type="entry name" value="MoCF_biosynth"/>
    <property type="match status" value="1"/>
</dbReference>
<dbReference type="SUPFAM" id="SSF142433">
    <property type="entry name" value="CinA-like"/>
    <property type="match status" value="1"/>
</dbReference>
<dbReference type="SUPFAM" id="SSF53218">
    <property type="entry name" value="Molybdenum cofactor biosynthesis proteins"/>
    <property type="match status" value="1"/>
</dbReference>
<accession>Q04TG1</accession>
<name>CINAL_LEPBJ</name>
<reference key="1">
    <citation type="journal article" date="2006" name="Proc. Natl. Acad. Sci. U.S.A.">
        <title>Genome reduction in Leptospira borgpetersenii reflects limited transmission potential.</title>
        <authorList>
            <person name="Bulach D.M."/>
            <person name="Zuerner R.L."/>
            <person name="Wilson P."/>
            <person name="Seemann T."/>
            <person name="McGrath A."/>
            <person name="Cullen P.A."/>
            <person name="Davis J."/>
            <person name="Johnson M."/>
            <person name="Kuczek E."/>
            <person name="Alt D.P."/>
            <person name="Peterson-Burch B."/>
            <person name="Coppel R.L."/>
            <person name="Rood J.I."/>
            <person name="Davies J.K."/>
            <person name="Adler B."/>
        </authorList>
    </citation>
    <scope>NUCLEOTIDE SEQUENCE [LARGE SCALE GENOMIC DNA]</scope>
    <source>
        <strain>JB197</strain>
    </source>
</reference>
<sequence>MSFPKVIVVSTGSELTAGRSQDTNSSWIANELFGMGFTVSKFVVLPDDPVVILEELRTLTELSMRETSILLVMTGGLGPTEDDYTLEAVCRLKGVTTEESPVARQRIETFYKLRGRNFQEAMQTAIRQVFVPKGSIILNNSVGIAPGFITSLAENVHLGCMPGVPGEMTEMFREELAPWILKTYSSREQLYSGFRFIWWMSESQFQKEFISKEKAIADGKAIWGVAAKRGYIRASFQSDSRALVDDLLRKLDTFYGTKSTPDIFEELPRMLLEKKITIGTAESCTGGLIAKTFTDVPGSSAYFYGGIISYDNSVKTGILGVKRNTLDEFGAVSRETAKEMAEGALDALGVDYSISVTGIAGPGGGTPQKKVGLVYFGIGQKNEETEIHEHYFPFPRSSFREFAAHTGIYLLYDRLKRSA</sequence>
<feature type="chain" id="PRO_0000336503" description="CinA-like protein">
    <location>
        <begin position="1"/>
        <end position="419"/>
    </location>
</feature>
<comment type="similarity">
    <text evidence="1">Belongs to the CinA family.</text>
</comment>
<evidence type="ECO:0000255" key="1">
    <source>
        <dbReference type="HAMAP-Rule" id="MF_00226"/>
    </source>
</evidence>
<gene>
    <name type="ordered locus">LBJ_1205</name>
</gene>
<protein>
    <recommendedName>
        <fullName evidence="1">CinA-like protein</fullName>
    </recommendedName>
</protein>
<organism>
    <name type="scientific">Leptospira borgpetersenii serovar Hardjo-bovis (strain JB197)</name>
    <dbReference type="NCBI Taxonomy" id="355277"/>
    <lineage>
        <taxon>Bacteria</taxon>
        <taxon>Pseudomonadati</taxon>
        <taxon>Spirochaetota</taxon>
        <taxon>Spirochaetia</taxon>
        <taxon>Leptospirales</taxon>
        <taxon>Leptospiraceae</taxon>
        <taxon>Leptospira</taxon>
    </lineage>
</organism>
<proteinExistence type="inferred from homology"/>